<organism>
    <name type="scientific">Mycobacterium tuberculosis (strain ATCC 25618 / H37Rv)</name>
    <dbReference type="NCBI Taxonomy" id="83332"/>
    <lineage>
        <taxon>Bacteria</taxon>
        <taxon>Bacillati</taxon>
        <taxon>Actinomycetota</taxon>
        <taxon>Actinomycetes</taxon>
        <taxon>Mycobacteriales</taxon>
        <taxon>Mycobacteriaceae</taxon>
        <taxon>Mycobacterium</taxon>
        <taxon>Mycobacterium tuberculosis complex</taxon>
    </lineage>
</organism>
<dbReference type="EC" id="3.5.1.18"/>
<dbReference type="EMBL" id="AL123456">
    <property type="protein sequence ID" value="CCP43958.1"/>
    <property type="molecule type" value="Genomic_DNA"/>
</dbReference>
<dbReference type="PIR" id="H70608">
    <property type="entry name" value="H70608"/>
</dbReference>
<dbReference type="RefSeq" id="WP_003406235.1">
    <property type="nucleotide sequence ID" value="NZ_NVQJ01000039.1"/>
</dbReference>
<dbReference type="RefSeq" id="YP_177796.1">
    <property type="nucleotide sequence ID" value="NC_000962.3"/>
</dbReference>
<dbReference type="SMR" id="P9WHS9"/>
<dbReference type="FunCoup" id="P9WHS9">
    <property type="interactions" value="118"/>
</dbReference>
<dbReference type="STRING" id="83332.Rv1202"/>
<dbReference type="PaxDb" id="83332-Rv1202"/>
<dbReference type="DNASU" id="887386"/>
<dbReference type="GeneID" id="887386"/>
<dbReference type="KEGG" id="mtu:Rv1202"/>
<dbReference type="KEGG" id="mtv:RVBD_1202"/>
<dbReference type="TubercuList" id="Rv1202"/>
<dbReference type="eggNOG" id="COG0624">
    <property type="taxonomic scope" value="Bacteria"/>
</dbReference>
<dbReference type="InParanoid" id="P9WHS9"/>
<dbReference type="OrthoDB" id="7055905at2"/>
<dbReference type="PhylomeDB" id="P9WHS9"/>
<dbReference type="BRENDA" id="3.5.1.18">
    <property type="organism ID" value="3445"/>
</dbReference>
<dbReference type="UniPathway" id="UPA00034">
    <property type="reaction ID" value="UER00021"/>
</dbReference>
<dbReference type="Proteomes" id="UP000001584">
    <property type="component" value="Chromosome"/>
</dbReference>
<dbReference type="GO" id="GO:0008777">
    <property type="term" value="F:acetylornithine deacetylase activity"/>
    <property type="evidence" value="ECO:0000318"/>
    <property type="project" value="GO_Central"/>
</dbReference>
<dbReference type="GO" id="GO:0046872">
    <property type="term" value="F:metal ion binding"/>
    <property type="evidence" value="ECO:0007669"/>
    <property type="project" value="UniProtKB-KW"/>
</dbReference>
<dbReference type="GO" id="GO:0009014">
    <property type="term" value="F:succinyl-diaminopimelate desuccinylase activity"/>
    <property type="evidence" value="ECO:0007669"/>
    <property type="project" value="UniProtKB-EC"/>
</dbReference>
<dbReference type="GO" id="GO:0019877">
    <property type="term" value="P:diaminopimelate biosynthetic process"/>
    <property type="evidence" value="ECO:0007669"/>
    <property type="project" value="UniProtKB-KW"/>
</dbReference>
<dbReference type="GO" id="GO:0006526">
    <property type="term" value="P:L-arginine biosynthetic process"/>
    <property type="evidence" value="ECO:0000318"/>
    <property type="project" value="GO_Central"/>
</dbReference>
<dbReference type="GO" id="GO:0009089">
    <property type="term" value="P:lysine biosynthetic process via diaminopimelate"/>
    <property type="evidence" value="ECO:0007669"/>
    <property type="project" value="UniProtKB-UniPathway"/>
</dbReference>
<dbReference type="CDD" id="cd05647">
    <property type="entry name" value="M20_DapE_actinobac"/>
    <property type="match status" value="1"/>
</dbReference>
<dbReference type="FunFam" id="3.30.70.360:FF:000011">
    <property type="entry name" value="Succinyl-diaminopimelate desuccinylase"/>
    <property type="match status" value="1"/>
</dbReference>
<dbReference type="Gene3D" id="3.30.70.360">
    <property type="match status" value="1"/>
</dbReference>
<dbReference type="Gene3D" id="3.40.630.10">
    <property type="entry name" value="Zn peptidases"/>
    <property type="match status" value="1"/>
</dbReference>
<dbReference type="InterPro" id="IPR001261">
    <property type="entry name" value="ArgE/DapE_CS"/>
</dbReference>
<dbReference type="InterPro" id="IPR036264">
    <property type="entry name" value="Bact_exopeptidase_dim_dom"/>
</dbReference>
<dbReference type="InterPro" id="IPR002933">
    <property type="entry name" value="Peptidase_M20"/>
</dbReference>
<dbReference type="InterPro" id="IPR011650">
    <property type="entry name" value="Peptidase_M20_dimer"/>
</dbReference>
<dbReference type="InterPro" id="IPR050072">
    <property type="entry name" value="Peptidase_M20A"/>
</dbReference>
<dbReference type="InterPro" id="IPR010174">
    <property type="entry name" value="Succinyl-DAP_deSuclase_DapE"/>
</dbReference>
<dbReference type="NCBIfam" id="TIGR01900">
    <property type="entry name" value="dapE-gram_pos"/>
    <property type="match status" value="1"/>
</dbReference>
<dbReference type="PANTHER" id="PTHR43808">
    <property type="entry name" value="ACETYLORNITHINE DEACETYLASE"/>
    <property type="match status" value="1"/>
</dbReference>
<dbReference type="PANTHER" id="PTHR43808:SF31">
    <property type="entry name" value="N-ACETYL-L-CITRULLINE DEACETYLASE"/>
    <property type="match status" value="1"/>
</dbReference>
<dbReference type="Pfam" id="PF07687">
    <property type="entry name" value="M20_dimer"/>
    <property type="match status" value="1"/>
</dbReference>
<dbReference type="Pfam" id="PF01546">
    <property type="entry name" value="Peptidase_M20"/>
    <property type="match status" value="1"/>
</dbReference>
<dbReference type="SUPFAM" id="SSF55031">
    <property type="entry name" value="Bacterial exopeptidase dimerisation domain"/>
    <property type="match status" value="1"/>
</dbReference>
<dbReference type="SUPFAM" id="SSF53187">
    <property type="entry name" value="Zn-dependent exopeptidases"/>
    <property type="match status" value="1"/>
</dbReference>
<dbReference type="PROSITE" id="PS00758">
    <property type="entry name" value="ARGE_DAPE_CPG2_1"/>
    <property type="match status" value="1"/>
</dbReference>
<name>DAPE_MYCTU</name>
<feature type="chain" id="PRO_0000414592" description="Putative succinyl-diaminopimelate desuccinylase DapE">
    <location>
        <begin position="1"/>
        <end position="354"/>
    </location>
</feature>
<feature type="active site" evidence="1">
    <location>
        <position position="71"/>
    </location>
</feature>
<feature type="active site" description="Proton acceptor" evidence="1">
    <location>
        <position position="125"/>
    </location>
</feature>
<feature type="binding site" evidence="1">
    <location>
        <position position="69"/>
    </location>
    <ligand>
        <name>Zn(2+)</name>
        <dbReference type="ChEBI" id="CHEBI:29105"/>
        <label>1</label>
    </ligand>
</feature>
<feature type="binding site" evidence="1">
    <location>
        <position position="95"/>
    </location>
    <ligand>
        <name>Zn(2+)</name>
        <dbReference type="ChEBI" id="CHEBI:29105"/>
        <label>1</label>
    </ligand>
</feature>
<feature type="binding site" evidence="1">
    <location>
        <position position="95"/>
    </location>
    <ligand>
        <name>Zn(2+)</name>
        <dbReference type="ChEBI" id="CHEBI:29105"/>
        <label>2</label>
    </ligand>
</feature>
<feature type="binding site" evidence="1">
    <location>
        <position position="126"/>
    </location>
    <ligand>
        <name>Zn(2+)</name>
        <dbReference type="ChEBI" id="CHEBI:29105"/>
        <label>2</label>
    </ligand>
</feature>
<feature type="binding site" evidence="1">
    <location>
        <position position="154"/>
    </location>
    <ligand>
        <name>Zn(2+)</name>
        <dbReference type="ChEBI" id="CHEBI:29105"/>
        <label>1</label>
    </ligand>
</feature>
<feature type="binding site" evidence="1">
    <location>
        <position position="330"/>
    </location>
    <ligand>
        <name>Zn(2+)</name>
        <dbReference type="ChEBI" id="CHEBI:29105"/>
        <label>2</label>
    </ligand>
</feature>
<comment type="function">
    <text evidence="1">Catalyzes the hydrolysis of N-succinyl-L,L-diaminopimelic acid (SDAP), forming succinate and LL-2,6-diaminoheptanedioate (DAP), an intermediate involved in the bacterial biosynthesis of lysine and meso-diaminopimelic acid.</text>
</comment>
<comment type="catalytic activity">
    <reaction>
        <text>N-succinyl-(2S,6S)-2,6-diaminopimelate + H2O = (2S,6S)-2,6-diaminopimelate + succinate</text>
        <dbReference type="Rhea" id="RHEA:22608"/>
        <dbReference type="ChEBI" id="CHEBI:15377"/>
        <dbReference type="ChEBI" id="CHEBI:30031"/>
        <dbReference type="ChEBI" id="CHEBI:57609"/>
        <dbReference type="ChEBI" id="CHEBI:58087"/>
        <dbReference type="EC" id="3.5.1.18"/>
    </reaction>
</comment>
<comment type="cofactor">
    <cofactor evidence="1">
        <name>Zn(2+)</name>
        <dbReference type="ChEBI" id="CHEBI:29105"/>
    </cofactor>
    <cofactor evidence="1">
        <name>Co(2+)</name>
        <dbReference type="ChEBI" id="CHEBI:48828"/>
    </cofactor>
    <text evidence="1">Binds 2 Zn(2+) or Co(2+) ions per subunit.</text>
</comment>
<comment type="pathway">
    <text>Amino-acid biosynthesis; L-lysine biosynthesis via DAP pathway; LL-2,6-diaminopimelate from (S)-tetrahydrodipicolinate (succinylase route): step 3/3.</text>
</comment>
<comment type="subunit">
    <text evidence="1">Homodimer.</text>
</comment>
<comment type="similarity">
    <text evidence="2">Belongs to the peptidase M20A family.</text>
</comment>
<gene>
    <name type="primary">dapE</name>
    <name type="ordered locus">Rv1202</name>
</gene>
<evidence type="ECO:0000250" key="1"/>
<evidence type="ECO:0000305" key="2"/>
<proteinExistence type="evidence at protein level"/>
<accession>P9WHS9</accession>
<accession>L0T8Y4</accession>
<accession>Q79FR1</accession>
<accession>Q7D8M5</accession>
<sequence>MLDLRGDPIELTAALIDIPSESRKEARIADEVEAALRAQASGFEIIRNGNAVLARTKLNRSSRVLLAGHLDTVPVAGNLPSRRENDQLHGCGAADMKSGDAVFLHLAATLAEPTHDLTLVFYDCEEIDSAANGLGRIQRELPDWLSADVAILGEPTAGCIEAGCQGTLRVVLSVTGTRAHSARSWLGDNAIHKLGAVLDRLAVYRARSVDIDGCTYREGLSAVRVAGGVAGNVIPDAASVTINYRFAPDRSVAAALQHVHDVFDGLDVQIEQTDAAAGALPGLSEPAAKALVEAAGGQVRAKYGWTDVSRFAALGIPAVNYGPGDPNLAHCRDERVPVGNITAAVDLLRRYLGG</sequence>
<reference key="1">
    <citation type="journal article" date="1998" name="Nature">
        <title>Deciphering the biology of Mycobacterium tuberculosis from the complete genome sequence.</title>
        <authorList>
            <person name="Cole S.T."/>
            <person name="Brosch R."/>
            <person name="Parkhill J."/>
            <person name="Garnier T."/>
            <person name="Churcher C.M."/>
            <person name="Harris D.E."/>
            <person name="Gordon S.V."/>
            <person name="Eiglmeier K."/>
            <person name="Gas S."/>
            <person name="Barry C.E. III"/>
            <person name="Tekaia F."/>
            <person name="Badcock K."/>
            <person name="Basham D."/>
            <person name="Brown D."/>
            <person name="Chillingworth T."/>
            <person name="Connor R."/>
            <person name="Davies R.M."/>
            <person name="Devlin K."/>
            <person name="Feltwell T."/>
            <person name="Gentles S."/>
            <person name="Hamlin N."/>
            <person name="Holroyd S."/>
            <person name="Hornsby T."/>
            <person name="Jagels K."/>
            <person name="Krogh A."/>
            <person name="McLean J."/>
            <person name="Moule S."/>
            <person name="Murphy L.D."/>
            <person name="Oliver S."/>
            <person name="Osborne J."/>
            <person name="Quail M.A."/>
            <person name="Rajandream M.A."/>
            <person name="Rogers J."/>
            <person name="Rutter S."/>
            <person name="Seeger K."/>
            <person name="Skelton S."/>
            <person name="Squares S."/>
            <person name="Squares R."/>
            <person name="Sulston J.E."/>
            <person name="Taylor K."/>
            <person name="Whitehead S."/>
            <person name="Barrell B.G."/>
        </authorList>
    </citation>
    <scope>NUCLEOTIDE SEQUENCE [LARGE SCALE GENOMIC DNA]</scope>
    <source>
        <strain>ATCC 25618 / H37Rv</strain>
    </source>
</reference>
<reference key="2">
    <citation type="journal article" date="2011" name="Mol. Cell. Proteomics">
        <title>Proteogenomic analysis of Mycobacterium tuberculosis by high resolution mass spectrometry.</title>
        <authorList>
            <person name="Kelkar D.S."/>
            <person name="Kumar D."/>
            <person name="Kumar P."/>
            <person name="Balakrishnan L."/>
            <person name="Muthusamy B."/>
            <person name="Yadav A.K."/>
            <person name="Shrivastava P."/>
            <person name="Marimuthu A."/>
            <person name="Anand S."/>
            <person name="Sundaram H."/>
            <person name="Kingsbury R."/>
            <person name="Harsha H.C."/>
            <person name="Nair B."/>
            <person name="Prasad T.S."/>
            <person name="Chauhan D.S."/>
            <person name="Katoch K."/>
            <person name="Katoch V.M."/>
            <person name="Kumar P."/>
            <person name="Chaerkady R."/>
            <person name="Ramachandran S."/>
            <person name="Dash D."/>
            <person name="Pandey A."/>
        </authorList>
    </citation>
    <scope>IDENTIFICATION BY MASS SPECTROMETRY [LARGE SCALE ANALYSIS]</scope>
    <source>
        <strain>ATCC 25618 / H37Rv</strain>
    </source>
</reference>
<keyword id="KW-0028">Amino-acid biosynthesis</keyword>
<keyword id="KW-0170">Cobalt</keyword>
<keyword id="KW-0220">Diaminopimelate biosynthesis</keyword>
<keyword id="KW-0378">Hydrolase</keyword>
<keyword id="KW-0457">Lysine biosynthesis</keyword>
<keyword id="KW-0479">Metal-binding</keyword>
<keyword id="KW-1185">Reference proteome</keyword>
<keyword id="KW-0862">Zinc</keyword>
<protein>
    <recommendedName>
        <fullName>Putative succinyl-diaminopimelate desuccinylase DapE</fullName>
        <shortName>SDAP desuccinylase</shortName>
        <ecNumber>3.5.1.18</ecNumber>
    </recommendedName>
</protein>